<reference key="1">
    <citation type="journal article" date="2004" name="Nat. Biotechnol.">
        <title>Complete genome sequence of the metabolically versatile photosynthetic bacterium Rhodopseudomonas palustris.</title>
        <authorList>
            <person name="Larimer F.W."/>
            <person name="Chain P."/>
            <person name="Hauser L."/>
            <person name="Lamerdin J.E."/>
            <person name="Malfatti S."/>
            <person name="Do L."/>
            <person name="Land M.L."/>
            <person name="Pelletier D.A."/>
            <person name="Beatty J.T."/>
            <person name="Lang A.S."/>
            <person name="Tabita F.R."/>
            <person name="Gibson J.L."/>
            <person name="Hanson T.E."/>
            <person name="Bobst C."/>
            <person name="Torres y Torres J.L."/>
            <person name="Peres C."/>
            <person name="Harrison F.H."/>
            <person name="Gibson J."/>
            <person name="Harwood C.S."/>
        </authorList>
    </citation>
    <scope>NUCLEOTIDE SEQUENCE [LARGE SCALE GENOMIC DNA]</scope>
    <source>
        <strain>ATCC BAA-98 / CGA009</strain>
    </source>
</reference>
<protein>
    <recommendedName>
        <fullName>UPF0283 membrane protein RPA1583</fullName>
    </recommendedName>
</protein>
<sequence length="369" mass="39403">MTERVPPRRPATFKLSDPSVVLIDSDDGGGSYTAKPSAKADARPAASAAGAAPPPPPPRARVELAREAEPPISAPKAPKSVINPKKGFRWGTVFWSAATGLVSLAFWLWISKLVEDLFAQSQTLGTIGMVLALLAGGSLAIIIGREAFGLIRLARIEQLHARAARVLETDNSAEARAIIRELLKFEHPNPQLAHGRATLQKHIDDIIDGADLIRLAERELMAQLDLEAKVLISKAAQRVSLVTAISPKALIDVLFVAIAATRLIGQLARLYGGRPGALGMFKLMRQTVSHLAITGGIALSDSVMQSVLGHGLASRLSAKLGEGVVNGMLTARLGLAAMDLTRPLPFDALPRPQLGDLVKDLMKKREKDE</sequence>
<organism>
    <name type="scientific">Rhodopseudomonas palustris (strain ATCC BAA-98 / CGA009)</name>
    <dbReference type="NCBI Taxonomy" id="258594"/>
    <lineage>
        <taxon>Bacteria</taxon>
        <taxon>Pseudomonadati</taxon>
        <taxon>Pseudomonadota</taxon>
        <taxon>Alphaproteobacteria</taxon>
        <taxon>Hyphomicrobiales</taxon>
        <taxon>Nitrobacteraceae</taxon>
        <taxon>Rhodopseudomonas</taxon>
    </lineage>
</organism>
<comment type="subcellular location">
    <subcellularLocation>
        <location evidence="1">Cell inner membrane</location>
        <topology evidence="1">Multi-pass membrane protein</topology>
    </subcellularLocation>
</comment>
<comment type="similarity">
    <text evidence="4">Belongs to the UPF0283 family.</text>
</comment>
<proteinExistence type="inferred from homology"/>
<name>Y1583_RHOPA</name>
<gene>
    <name type="ordered locus">RPA1583</name>
</gene>
<feature type="chain" id="PRO_0000214182" description="UPF0283 membrane protein RPA1583">
    <location>
        <begin position="1"/>
        <end position="369"/>
    </location>
</feature>
<feature type="transmembrane region" description="Helical" evidence="2">
    <location>
        <begin position="90"/>
        <end position="110"/>
    </location>
</feature>
<feature type="transmembrane region" description="Helical" evidence="2">
    <location>
        <begin position="124"/>
        <end position="144"/>
    </location>
</feature>
<feature type="transmembrane region" description="Helical" evidence="2">
    <location>
        <begin position="239"/>
        <end position="259"/>
    </location>
</feature>
<feature type="region of interest" description="Disordered" evidence="3">
    <location>
        <begin position="1"/>
        <end position="61"/>
    </location>
</feature>
<feature type="compositionally biased region" description="Low complexity" evidence="3">
    <location>
        <begin position="34"/>
        <end position="51"/>
    </location>
</feature>
<keyword id="KW-0997">Cell inner membrane</keyword>
<keyword id="KW-1003">Cell membrane</keyword>
<keyword id="KW-0472">Membrane</keyword>
<keyword id="KW-0812">Transmembrane</keyword>
<keyword id="KW-1133">Transmembrane helix</keyword>
<dbReference type="EMBL" id="BX572598">
    <property type="protein sequence ID" value="CAE27024.1"/>
    <property type="molecule type" value="Genomic_DNA"/>
</dbReference>
<dbReference type="RefSeq" id="WP_011157142.1">
    <property type="nucleotide sequence ID" value="NZ_CP116810.1"/>
</dbReference>
<dbReference type="STRING" id="258594.RPA1583"/>
<dbReference type="GeneID" id="66892613"/>
<dbReference type="eggNOG" id="COG3768">
    <property type="taxonomic scope" value="Bacteria"/>
</dbReference>
<dbReference type="HOGENOM" id="CLU_057693_1_0_5"/>
<dbReference type="PhylomeDB" id="Q6N9G6"/>
<dbReference type="GO" id="GO:0005886">
    <property type="term" value="C:plasma membrane"/>
    <property type="evidence" value="ECO:0007669"/>
    <property type="project" value="UniProtKB-SubCell"/>
</dbReference>
<dbReference type="InterPro" id="IPR021147">
    <property type="entry name" value="DUF697"/>
</dbReference>
<dbReference type="InterPro" id="IPR006507">
    <property type="entry name" value="UPF0283"/>
</dbReference>
<dbReference type="NCBIfam" id="TIGR01620">
    <property type="entry name" value="hyp_HI0043"/>
    <property type="match status" value="1"/>
</dbReference>
<dbReference type="PANTHER" id="PTHR39342">
    <property type="entry name" value="UPF0283 MEMBRANE PROTEIN YCJF"/>
    <property type="match status" value="1"/>
</dbReference>
<dbReference type="PANTHER" id="PTHR39342:SF1">
    <property type="entry name" value="UPF0283 MEMBRANE PROTEIN YCJF"/>
    <property type="match status" value="1"/>
</dbReference>
<dbReference type="Pfam" id="PF05128">
    <property type="entry name" value="DUF697"/>
    <property type="match status" value="1"/>
</dbReference>
<accession>Q6N9G6</accession>
<evidence type="ECO:0000250" key="1"/>
<evidence type="ECO:0000255" key="2"/>
<evidence type="ECO:0000256" key="3">
    <source>
        <dbReference type="SAM" id="MobiDB-lite"/>
    </source>
</evidence>
<evidence type="ECO:0000305" key="4"/>